<evidence type="ECO:0000250" key="1">
    <source>
        <dbReference type="UniProtKB" id="P15222"/>
    </source>
</evidence>
<evidence type="ECO:0000250" key="2">
    <source>
        <dbReference type="UniProtKB" id="Q9UAD0"/>
    </source>
</evidence>
<evidence type="ECO:0000255" key="3">
    <source>
        <dbReference type="PROSITE-ProRule" id="PRU00545"/>
    </source>
</evidence>
<evidence type="ECO:0000269" key="4">
    <source>
    </source>
</evidence>
<evidence type="ECO:0000303" key="5">
    <source>
    </source>
</evidence>
<evidence type="ECO:0000305" key="6">
    <source>
    </source>
</evidence>
<sequence>MCIPCFTTNPNMAAKCNACCGSRRGSCRGPQCIC</sequence>
<organism>
    <name type="scientific">Androctonus australis</name>
    <name type="common">Sahara scorpion</name>
    <dbReference type="NCBI Taxonomy" id="6858"/>
    <lineage>
        <taxon>Eukaryota</taxon>
        <taxon>Metazoa</taxon>
        <taxon>Ecdysozoa</taxon>
        <taxon>Arthropoda</taxon>
        <taxon>Chelicerata</taxon>
        <taxon>Arachnida</taxon>
        <taxon>Scorpiones</taxon>
        <taxon>Buthida</taxon>
        <taxon>Buthoidea</taxon>
        <taxon>Buthidae</taxon>
        <taxon>Androctonus</taxon>
    </lineage>
</organism>
<feature type="peptide" id="PRO_0000397237" description="Chlorotoxin-like peptide AaCtx" evidence="4">
    <location>
        <begin position="1"/>
        <end position="34"/>
    </location>
</feature>
<feature type="disulfide bond" evidence="1 3">
    <location>
        <begin position="2"/>
        <end position="19"/>
    </location>
</feature>
<feature type="disulfide bond" evidence="1 3">
    <location>
        <begin position="5"/>
        <end position="27"/>
    </location>
</feature>
<feature type="disulfide bond" evidence="1 3">
    <location>
        <begin position="16"/>
        <end position="32"/>
    </location>
</feature>
<feature type="disulfide bond" evidence="1 3">
    <location>
        <begin position="20"/>
        <end position="34"/>
    </location>
</feature>
<protein>
    <recommendedName>
        <fullName evidence="5">Chlorotoxin-like peptide AaCtx</fullName>
    </recommendedName>
</protein>
<accession>P86436</accession>
<proteinExistence type="evidence at protein level"/>
<comment type="function">
    <text evidence="2 4">Toxin with unknown function in healthy organisms. On glioma cells, interacts with chloride channels (probably ClC-3/CLCN3) and MMP2 at the surface of glioma cells. This complex is then internalized via caveolae, thus inhibiting the chloride channels necessary for cell shrinkage and tumor propagation (By similarity). Inhibits migration and invasion of U87 glioma cells expressing CLCN3/ClC-3 voltage-gated chloride channels.</text>
</comment>
<comment type="subcellular location">
    <subcellularLocation>
        <location evidence="4">Secreted</location>
    </subcellularLocation>
</comment>
<comment type="tissue specificity">
    <text evidence="6">Expressed by the venom gland.</text>
</comment>
<comment type="domain">
    <text evidence="1">The presence of a 'disulfide through disulfide knot' structurally defines this protein as a knottin.</text>
</comment>
<comment type="mass spectrometry"/>
<comment type="miscellaneous">
    <text evidence="6">Negative results: intracerebroventricular injection into mice does not induce neurotoxicity (up to 1 ug doses).</text>
</comment>
<comment type="similarity">
    <text evidence="3">Belongs to the short scorpion toxin superfamily. Chloride channel inhibitor family.</text>
</comment>
<dbReference type="SMR" id="P86436"/>
<dbReference type="TCDB" id="8.B.7.1.2">
    <property type="family name" value="the cl(-) channel peptide inhibitor (gatx1) family"/>
</dbReference>
<dbReference type="GO" id="GO:0005576">
    <property type="term" value="C:extracellular region"/>
    <property type="evidence" value="ECO:0007669"/>
    <property type="project" value="UniProtKB-SubCell"/>
</dbReference>
<dbReference type="GO" id="GO:0017081">
    <property type="term" value="F:chloride channel regulator activity"/>
    <property type="evidence" value="ECO:0007669"/>
    <property type="project" value="UniProtKB-KW"/>
</dbReference>
<dbReference type="GO" id="GO:0090729">
    <property type="term" value="F:toxin activity"/>
    <property type="evidence" value="ECO:0007669"/>
    <property type="project" value="UniProtKB-KW"/>
</dbReference>
<dbReference type="InterPro" id="IPR036574">
    <property type="entry name" value="Scorpion_toxin-like_sf"/>
</dbReference>
<dbReference type="InterPro" id="IPR007958">
    <property type="entry name" value="Scorpion_toxinS_Cl_inh"/>
</dbReference>
<dbReference type="Pfam" id="PF05294">
    <property type="entry name" value="Toxin_5"/>
    <property type="match status" value="1"/>
</dbReference>
<dbReference type="SUPFAM" id="SSF57095">
    <property type="entry name" value="Scorpion toxin-like"/>
    <property type="match status" value="1"/>
</dbReference>
<dbReference type="PROSITE" id="PS51200">
    <property type="entry name" value="SHORT_SCORPION_CHLORIDE"/>
    <property type="match status" value="1"/>
</dbReference>
<name>CTXL_ANDAU</name>
<reference key="1">
    <citation type="journal article" date="2011" name="Peptides">
        <title>Purification, synthesis and characterization of AaCtx, the first chlorotoxin-like peptide from Androctonus australis scorpion venom.</title>
        <authorList>
            <person name="Rjeibi I."/>
            <person name="Mabrouk K."/>
            <person name="Mosrati H."/>
            <person name="Berenguer C."/>
            <person name="Mejdoub H."/>
            <person name="Villard C."/>
            <person name="Laffitte D."/>
            <person name="Bertin D."/>
            <person name="Ouafik L."/>
            <person name="Luis J."/>
            <person name="Elayeb M."/>
            <person name="Srairi-Abid N."/>
        </authorList>
    </citation>
    <scope>PROTEIN SEQUENCE</scope>
    <scope>SYNTHESIS</scope>
    <scope>FUNCTION</scope>
    <scope>BIOASSAY</scope>
    <scope>SUBCELLULAR LOCATION</scope>
    <scope>MASS SPECTROMETRY</scope>
    <source>
        <tissue>Venom</tissue>
    </source>
</reference>
<keyword id="KW-1265">Chloride channel impairing toxin</keyword>
<keyword id="KW-0903">Direct protein sequencing</keyword>
<keyword id="KW-1015">Disulfide bond</keyword>
<keyword id="KW-0872">Ion channel impairing toxin</keyword>
<keyword id="KW-0960">Knottin</keyword>
<keyword id="KW-0964">Secreted</keyword>
<keyword id="KW-0800">Toxin</keyword>
<keyword id="KW-0870">Voltage-gated chloride channel impairing toxin</keyword>